<protein>
    <recommendedName>
        <fullName evidence="6">Zinc finger protein 6</fullName>
    </recommendedName>
</protein>
<name>ZFP6_ARATH</name>
<feature type="chain" id="PRO_0000047847" description="Zinc finger protein 6">
    <location>
        <begin position="1"/>
        <end position="197"/>
    </location>
</feature>
<feature type="zinc finger region" description="C2H2-type" evidence="2">
    <location>
        <begin position="41"/>
        <end position="63"/>
    </location>
</feature>
<organism>
    <name type="scientific">Arabidopsis thaliana</name>
    <name type="common">Mouse-ear cress</name>
    <dbReference type="NCBI Taxonomy" id="3702"/>
    <lineage>
        <taxon>Eukaryota</taxon>
        <taxon>Viridiplantae</taxon>
        <taxon>Streptophyta</taxon>
        <taxon>Embryophyta</taxon>
        <taxon>Tracheophyta</taxon>
        <taxon>Spermatophyta</taxon>
        <taxon>Magnoliopsida</taxon>
        <taxon>eudicotyledons</taxon>
        <taxon>Gunneridae</taxon>
        <taxon>Pentapetalae</taxon>
        <taxon>rosids</taxon>
        <taxon>malvids</taxon>
        <taxon>Brassicales</taxon>
        <taxon>Brassicaceae</taxon>
        <taxon>Camelineae</taxon>
        <taxon>Arabidopsis</taxon>
    </lineage>
</organism>
<reference key="1">
    <citation type="journal article" date="1995" name="Plant Mol. Biol.">
        <title>Characterization of a family of Arabidopsis zinc finger protein cDNAs.</title>
        <authorList>
            <person name="Tague B.W."/>
            <person name="Goodman H.M."/>
        </authorList>
    </citation>
    <scope>NUCLEOTIDE SEQUENCE [MRNA]</scope>
    <source>
        <strain>cv. Landsberg erecta</strain>
        <tissue>Root</tissue>
    </source>
</reference>
<reference key="2">
    <citation type="journal article" date="2000" name="Nature">
        <title>Sequence and analysis of chromosome 1 of the plant Arabidopsis thaliana.</title>
        <authorList>
            <person name="Theologis A."/>
            <person name="Ecker J.R."/>
            <person name="Palm C.J."/>
            <person name="Federspiel N.A."/>
            <person name="Kaul S."/>
            <person name="White O."/>
            <person name="Alonso J."/>
            <person name="Altafi H."/>
            <person name="Araujo R."/>
            <person name="Bowman C.L."/>
            <person name="Brooks S.Y."/>
            <person name="Buehler E."/>
            <person name="Chan A."/>
            <person name="Chao Q."/>
            <person name="Chen H."/>
            <person name="Cheuk R.F."/>
            <person name="Chin C.W."/>
            <person name="Chung M.K."/>
            <person name="Conn L."/>
            <person name="Conway A.B."/>
            <person name="Conway A.R."/>
            <person name="Creasy T.H."/>
            <person name="Dewar K."/>
            <person name="Dunn P."/>
            <person name="Etgu P."/>
            <person name="Feldblyum T.V."/>
            <person name="Feng J.-D."/>
            <person name="Fong B."/>
            <person name="Fujii C.Y."/>
            <person name="Gill J.E."/>
            <person name="Goldsmith A.D."/>
            <person name="Haas B."/>
            <person name="Hansen N.F."/>
            <person name="Hughes B."/>
            <person name="Huizar L."/>
            <person name="Hunter J.L."/>
            <person name="Jenkins J."/>
            <person name="Johnson-Hopson C."/>
            <person name="Khan S."/>
            <person name="Khaykin E."/>
            <person name="Kim C.J."/>
            <person name="Koo H.L."/>
            <person name="Kremenetskaia I."/>
            <person name="Kurtz D.B."/>
            <person name="Kwan A."/>
            <person name="Lam B."/>
            <person name="Langin-Hooper S."/>
            <person name="Lee A."/>
            <person name="Lee J.M."/>
            <person name="Lenz C.A."/>
            <person name="Li J.H."/>
            <person name="Li Y.-P."/>
            <person name="Lin X."/>
            <person name="Liu S.X."/>
            <person name="Liu Z.A."/>
            <person name="Luros J.S."/>
            <person name="Maiti R."/>
            <person name="Marziali A."/>
            <person name="Militscher J."/>
            <person name="Miranda M."/>
            <person name="Nguyen M."/>
            <person name="Nierman W.C."/>
            <person name="Osborne B.I."/>
            <person name="Pai G."/>
            <person name="Peterson J."/>
            <person name="Pham P.K."/>
            <person name="Rizzo M."/>
            <person name="Rooney T."/>
            <person name="Rowley D."/>
            <person name="Sakano H."/>
            <person name="Salzberg S.L."/>
            <person name="Schwartz J.R."/>
            <person name="Shinn P."/>
            <person name="Southwick A.M."/>
            <person name="Sun H."/>
            <person name="Tallon L.J."/>
            <person name="Tambunga G."/>
            <person name="Toriumi M.J."/>
            <person name="Town C.D."/>
            <person name="Utterback T."/>
            <person name="Van Aken S."/>
            <person name="Vaysberg M."/>
            <person name="Vysotskaia V.S."/>
            <person name="Walker M."/>
            <person name="Wu D."/>
            <person name="Yu G."/>
            <person name="Fraser C.M."/>
            <person name="Venter J.C."/>
            <person name="Davis R.W."/>
        </authorList>
    </citation>
    <scope>NUCLEOTIDE SEQUENCE [LARGE SCALE GENOMIC DNA]</scope>
    <source>
        <strain>cv. Columbia</strain>
    </source>
</reference>
<reference key="3">
    <citation type="journal article" date="2017" name="Plant J.">
        <title>Araport11: a complete reannotation of the Arabidopsis thaliana reference genome.</title>
        <authorList>
            <person name="Cheng C.Y."/>
            <person name="Krishnakumar V."/>
            <person name="Chan A.P."/>
            <person name="Thibaud-Nissen F."/>
            <person name="Schobel S."/>
            <person name="Town C.D."/>
        </authorList>
    </citation>
    <scope>GENOME REANNOTATION</scope>
    <source>
        <strain>cv. Columbia</strain>
    </source>
</reference>
<reference key="4">
    <citation type="journal article" date="2003" name="Science">
        <title>Empirical analysis of transcriptional activity in the Arabidopsis genome.</title>
        <authorList>
            <person name="Yamada K."/>
            <person name="Lim J."/>
            <person name="Dale J.M."/>
            <person name="Chen H."/>
            <person name="Shinn P."/>
            <person name="Palm C.J."/>
            <person name="Southwick A.M."/>
            <person name="Wu H.C."/>
            <person name="Kim C.J."/>
            <person name="Nguyen M."/>
            <person name="Pham P.K."/>
            <person name="Cheuk R.F."/>
            <person name="Karlin-Newmann G."/>
            <person name="Liu S.X."/>
            <person name="Lam B."/>
            <person name="Sakano H."/>
            <person name="Wu T."/>
            <person name="Yu G."/>
            <person name="Miranda M."/>
            <person name="Quach H.L."/>
            <person name="Tripp M."/>
            <person name="Chang C.H."/>
            <person name="Lee J.M."/>
            <person name="Toriumi M.J."/>
            <person name="Chan M.M."/>
            <person name="Tang C.C."/>
            <person name="Onodera C.S."/>
            <person name="Deng J.M."/>
            <person name="Akiyama K."/>
            <person name="Ansari Y."/>
            <person name="Arakawa T."/>
            <person name="Banh J."/>
            <person name="Banno F."/>
            <person name="Bowser L."/>
            <person name="Brooks S.Y."/>
            <person name="Carninci P."/>
            <person name="Chao Q."/>
            <person name="Choy N."/>
            <person name="Enju A."/>
            <person name="Goldsmith A.D."/>
            <person name="Gurjal M."/>
            <person name="Hansen N.F."/>
            <person name="Hayashizaki Y."/>
            <person name="Johnson-Hopson C."/>
            <person name="Hsuan V.W."/>
            <person name="Iida K."/>
            <person name="Karnes M."/>
            <person name="Khan S."/>
            <person name="Koesema E."/>
            <person name="Ishida J."/>
            <person name="Jiang P.X."/>
            <person name="Jones T."/>
            <person name="Kawai J."/>
            <person name="Kamiya A."/>
            <person name="Meyers C."/>
            <person name="Nakajima M."/>
            <person name="Narusaka M."/>
            <person name="Seki M."/>
            <person name="Sakurai T."/>
            <person name="Satou M."/>
            <person name="Tamse R."/>
            <person name="Vaysberg M."/>
            <person name="Wallender E.K."/>
            <person name="Wong C."/>
            <person name="Yamamura Y."/>
            <person name="Yuan S."/>
            <person name="Shinozaki K."/>
            <person name="Davis R.W."/>
            <person name="Theologis A."/>
            <person name="Ecker J.R."/>
        </authorList>
    </citation>
    <scope>NUCLEOTIDE SEQUENCE [LARGE SCALE MRNA]</scope>
    <source>
        <strain>cv. Columbia</strain>
    </source>
</reference>
<reference key="5">
    <citation type="journal article" date="2013" name="New Phytol.">
        <title>Zinc finger protein 6 (ZFP6) regulates trichome initiation by integrating gibberellin and cytokinin signaling in Arabidopsis thaliana.</title>
        <authorList>
            <person name="Zhou Z."/>
            <person name="Sun L."/>
            <person name="Zhao Y."/>
            <person name="An L."/>
            <person name="Yan A."/>
            <person name="Meng X."/>
            <person name="Gan Y."/>
        </authorList>
    </citation>
    <scope>FUNCTION</scope>
    <scope>TISSUE SPECIFICITY</scope>
    <scope>INDUCTION</scope>
    <scope>DISRUPTION PHENOTYPE</scope>
</reference>
<reference key="6">
    <citation type="journal article" date="2014" name="Plant Physiol.">
        <title>The Arabidopsis ZINC FINGER PROTEIN3 interferes with abscisic acid and light signaling in seed germination and plant development.</title>
        <authorList>
            <person name="Joseph M.P."/>
            <person name="Papdi C."/>
            <person name="Kozma-Bognar L."/>
            <person name="Nagy I."/>
            <person name="Lopez-Carbonell M."/>
            <person name="Rigo G."/>
            <person name="Koncz C."/>
            <person name="Szabados L."/>
        </authorList>
    </citation>
    <scope>FUNCTION</scope>
</reference>
<gene>
    <name evidence="5" type="primary">ZFP6</name>
    <name type="synonym">ZEP6</name>
    <name type="ordered locus">At1g67030</name>
    <name type="ORF">F1O19.8</name>
    <name type="ORF">F1O19_5</name>
</gene>
<keyword id="KW-0938">Abscisic acid signaling pathway</keyword>
<keyword id="KW-0932">Cytokinin signaling pathway</keyword>
<keyword id="KW-0217">Developmental protein</keyword>
<keyword id="KW-0221">Differentiation</keyword>
<keyword id="KW-0939">Gibberellin signaling pathway</keyword>
<keyword id="KW-0479">Metal-binding</keyword>
<keyword id="KW-0539">Nucleus</keyword>
<keyword id="KW-1185">Reference proteome</keyword>
<keyword id="KW-0804">Transcription</keyword>
<keyword id="KW-0805">Transcription regulation</keyword>
<keyword id="KW-0862">Zinc</keyword>
<keyword id="KW-0863">Zinc-finger</keyword>
<dbReference type="EMBL" id="L39649">
    <property type="protein sequence ID" value="AAA87302.1"/>
    <property type="molecule type" value="mRNA"/>
</dbReference>
<dbReference type="EMBL" id="AC007152">
    <property type="protein sequence ID" value="AAF98212.1"/>
    <property type="molecule type" value="Genomic_DNA"/>
</dbReference>
<dbReference type="EMBL" id="CP002684">
    <property type="protein sequence ID" value="AEE34586.1"/>
    <property type="molecule type" value="Genomic_DNA"/>
</dbReference>
<dbReference type="EMBL" id="AY050387">
    <property type="protein sequence ID" value="AAK91404.1"/>
    <property type="molecule type" value="mRNA"/>
</dbReference>
<dbReference type="EMBL" id="AY093800">
    <property type="protein sequence ID" value="AAM10416.1"/>
    <property type="molecule type" value="mRNA"/>
</dbReference>
<dbReference type="PIR" id="S55886">
    <property type="entry name" value="S55886"/>
</dbReference>
<dbReference type="RefSeq" id="NP_176873.1">
    <property type="nucleotide sequence ID" value="NM_105372.3"/>
</dbReference>
<dbReference type="BioGRID" id="28243">
    <property type="interactions" value="5"/>
</dbReference>
<dbReference type="IntAct" id="Q39265">
    <property type="interactions" value="6"/>
</dbReference>
<dbReference type="STRING" id="3702.Q39265"/>
<dbReference type="PaxDb" id="3702-AT1G67030.1"/>
<dbReference type="ProteomicsDB" id="242938"/>
<dbReference type="EnsemblPlants" id="AT1G67030.1">
    <property type="protein sequence ID" value="AT1G67030.1"/>
    <property type="gene ID" value="AT1G67030"/>
</dbReference>
<dbReference type="GeneID" id="843022"/>
<dbReference type="Gramene" id="AT1G67030.1">
    <property type="protein sequence ID" value="AT1G67030.1"/>
    <property type="gene ID" value="AT1G67030"/>
</dbReference>
<dbReference type="KEGG" id="ath:AT1G67030"/>
<dbReference type="Araport" id="AT1G67030"/>
<dbReference type="TAIR" id="AT1G67030">
    <property type="gene designation" value="ZFP6"/>
</dbReference>
<dbReference type="eggNOG" id="ENOG502QTV9">
    <property type="taxonomic scope" value="Eukaryota"/>
</dbReference>
<dbReference type="HOGENOM" id="CLU_091153_0_0_1"/>
<dbReference type="InParanoid" id="Q39265"/>
<dbReference type="OMA" id="HPHENPL"/>
<dbReference type="PhylomeDB" id="Q39265"/>
<dbReference type="PRO" id="PR:Q39265"/>
<dbReference type="Proteomes" id="UP000006548">
    <property type="component" value="Chromosome 1"/>
</dbReference>
<dbReference type="ExpressionAtlas" id="Q39265">
    <property type="expression patterns" value="baseline and differential"/>
</dbReference>
<dbReference type="GO" id="GO:0022626">
    <property type="term" value="C:cytosolic ribosome"/>
    <property type="evidence" value="ECO:0007005"/>
    <property type="project" value="TAIR"/>
</dbReference>
<dbReference type="GO" id="GO:0005634">
    <property type="term" value="C:nucleus"/>
    <property type="evidence" value="ECO:0007669"/>
    <property type="project" value="UniProtKB-SubCell"/>
</dbReference>
<dbReference type="GO" id="GO:0003700">
    <property type="term" value="F:DNA-binding transcription factor activity"/>
    <property type="evidence" value="ECO:0000250"/>
    <property type="project" value="TAIR"/>
</dbReference>
<dbReference type="GO" id="GO:0000976">
    <property type="term" value="F:transcription cis-regulatory region binding"/>
    <property type="evidence" value="ECO:0000353"/>
    <property type="project" value="TAIR"/>
</dbReference>
<dbReference type="GO" id="GO:0008270">
    <property type="term" value="F:zinc ion binding"/>
    <property type="evidence" value="ECO:0007669"/>
    <property type="project" value="UniProtKB-KW"/>
</dbReference>
<dbReference type="GO" id="GO:0009738">
    <property type="term" value="P:abscisic acid-activated signaling pathway"/>
    <property type="evidence" value="ECO:0007669"/>
    <property type="project" value="UniProtKB-KW"/>
</dbReference>
<dbReference type="GO" id="GO:0009736">
    <property type="term" value="P:cytokinin-activated signaling pathway"/>
    <property type="evidence" value="ECO:0000315"/>
    <property type="project" value="TAIR"/>
</dbReference>
<dbReference type="GO" id="GO:0009740">
    <property type="term" value="P:gibberellic acid mediated signaling pathway"/>
    <property type="evidence" value="ECO:0000315"/>
    <property type="project" value="TAIR"/>
</dbReference>
<dbReference type="GO" id="GO:0009788">
    <property type="term" value="P:negative regulation of abscisic acid-activated signaling pathway"/>
    <property type="evidence" value="ECO:0000315"/>
    <property type="project" value="UniProtKB"/>
</dbReference>
<dbReference type="GO" id="GO:0006355">
    <property type="term" value="P:regulation of DNA-templated transcription"/>
    <property type="evidence" value="ECO:0000304"/>
    <property type="project" value="TAIR"/>
</dbReference>
<dbReference type="GO" id="GO:0010026">
    <property type="term" value="P:trichome differentiation"/>
    <property type="evidence" value="ECO:0000315"/>
    <property type="project" value="TAIR"/>
</dbReference>
<dbReference type="GO" id="GO:0010090">
    <property type="term" value="P:trichome morphogenesis"/>
    <property type="evidence" value="ECO:0007669"/>
    <property type="project" value="InterPro"/>
</dbReference>
<dbReference type="FunFam" id="3.30.160.60:FF:002067">
    <property type="entry name" value="Zinc finger protein 6"/>
    <property type="match status" value="1"/>
</dbReference>
<dbReference type="Gene3D" id="3.30.160.60">
    <property type="entry name" value="Classic Zinc Finger"/>
    <property type="match status" value="1"/>
</dbReference>
<dbReference type="InterPro" id="IPR044299">
    <property type="entry name" value="GIS3/ZFP5/ZFP6"/>
</dbReference>
<dbReference type="InterPro" id="IPR036236">
    <property type="entry name" value="Znf_C2H2_sf"/>
</dbReference>
<dbReference type="InterPro" id="IPR013087">
    <property type="entry name" value="Znf_C2H2_type"/>
</dbReference>
<dbReference type="PANTHER" id="PTHR46353">
    <property type="entry name" value="ZINC FINGER PROTEIN 5"/>
    <property type="match status" value="1"/>
</dbReference>
<dbReference type="PANTHER" id="PTHR46353:SF13">
    <property type="entry name" value="ZINC FINGER PROTEIN 6"/>
    <property type="match status" value="1"/>
</dbReference>
<dbReference type="SUPFAM" id="SSF57667">
    <property type="entry name" value="beta-beta-alpha zinc fingers"/>
    <property type="match status" value="1"/>
</dbReference>
<dbReference type="PROSITE" id="PS00028">
    <property type="entry name" value="ZINC_FINGER_C2H2_1"/>
    <property type="match status" value="1"/>
</dbReference>
<dbReference type="PROSITE" id="PS50157">
    <property type="entry name" value="ZINC_FINGER_C2H2_2"/>
    <property type="match status" value="1"/>
</dbReference>
<evidence type="ECO:0000250" key="1">
    <source>
        <dbReference type="UniProtKB" id="Q39261"/>
    </source>
</evidence>
<evidence type="ECO:0000255" key="2">
    <source>
        <dbReference type="PROSITE-ProRule" id="PRU00042"/>
    </source>
</evidence>
<evidence type="ECO:0000269" key="3">
    <source>
    </source>
</evidence>
<evidence type="ECO:0000269" key="4">
    <source>
    </source>
</evidence>
<evidence type="ECO:0000303" key="5">
    <source>
    </source>
</evidence>
<evidence type="ECO:0000305" key="6"/>
<evidence type="ECO:0000305" key="7">
    <source>
    </source>
</evidence>
<comment type="function">
    <text evidence="3 4">Probable transcription factor required for the initiation of inflorescence trichomes in response to gibberellin and cytokinin. Acts upstream of GIS, GIS2, ZFP8, ZFP5 and the trichome initiation regulators GL1 and GL3 (PubMed:23506479). Acts as a negative regulator of abscisic acid (ABA) signaling during germination and early seedling development (PubMed:24808098).</text>
</comment>
<comment type="subcellular location">
    <subcellularLocation>
        <location evidence="1">Nucleus</location>
    </subcellularLocation>
</comment>
<comment type="tissue specificity">
    <text evidence="3">Highly expressed in roots, mature stem and lateral branches. Expressed at low levels in rosette leaves and siliques.</text>
</comment>
<comment type="induction">
    <text evidence="3">By cytokinin and gibberellin.</text>
</comment>
<comment type="disruption phenotype">
    <text evidence="3">Reduced number of trichomes on sepals, cauline leaves, lateral branches and main inflorescence stems.</text>
</comment>
<comment type="miscellaneous">
    <text evidence="4 7">Seeds over-expressing ZFP6 are insensitive to inhibition of germination by abscisic acid (ABA) (PubMed:24808098). Plants over-expressing ZFP6 show formation of ectopic trichomes on carpels and other inflorescence organs (Probable).</text>
</comment>
<accession>Q39265</accession>
<proteinExistence type="evidence at transcript level"/>
<sequence length="197" mass="21414">MATETSSLKLFGINLLETTSVQNQSSEPRPGSGSGSESRKYECQYCCREFANSQALGGHQNAHKKERQLLKRAQMLATRGLPRHHNFHPHTNPLLSAFAPLPHLLSQPHPPPHMMLSPSSSSSKWLYGEHMSSQNAVGYFHGGRGLYGGGMESMAGEVKTHGGSLPEMRRFAGDSDRSSGIKLENGIGLDLHLSLGP</sequence>